<keyword id="KW-1165">Clathrin-mediated endocytosis of virus by host</keyword>
<keyword id="KW-1015">Disulfide bond</keyword>
<keyword id="KW-1170">Fusion of virus membrane with host endosomal membrane</keyword>
<keyword id="KW-1168">Fusion of virus membrane with host membrane</keyword>
<keyword id="KW-0325">Glycoprotein</keyword>
<keyword id="KW-1043">Host membrane</keyword>
<keyword id="KW-0945">Host-virus interaction</keyword>
<keyword id="KW-0449">Lipoprotein</keyword>
<keyword id="KW-0472">Membrane</keyword>
<keyword id="KW-0564">Palmitate</keyword>
<keyword id="KW-1185">Reference proteome</keyword>
<keyword id="KW-0732">Signal</keyword>
<keyword id="KW-0812">Transmembrane</keyword>
<keyword id="KW-1133">Transmembrane helix</keyword>
<keyword id="KW-1161">Viral attachment to host cell</keyword>
<keyword id="KW-0261">Viral envelope protein</keyword>
<keyword id="KW-1162">Viral penetration into host cytoplasm</keyword>
<keyword id="KW-0946">Virion</keyword>
<keyword id="KW-1164">Virus endocytosis by host</keyword>
<keyword id="KW-1160">Virus entry into host cell</keyword>
<organism>
    <name type="scientific">Drosophila melanogaster sigma virus (isolate Drosophila/USA/AP30/2005)</name>
    <name type="common">DMelSV</name>
    <dbReference type="NCBI Taxonomy" id="666363"/>
    <lineage>
        <taxon>Viruses</taxon>
        <taxon>Riboviria</taxon>
        <taxon>Orthornavirae</taxon>
        <taxon>Negarnaviricota</taxon>
        <taxon>Haploviricotina</taxon>
        <taxon>Monjiviricetes</taxon>
        <taxon>Mononegavirales</taxon>
        <taxon>Rhabdoviridae</taxon>
        <taxon>Alpharhabdovirinae</taxon>
        <taxon>Sigmavirus</taxon>
        <taxon>Sigmavirus melanogaster</taxon>
    </lineage>
</organism>
<protein>
    <recommendedName>
        <fullName>Glycoprotein</fullName>
    </recommendedName>
</protein>
<sequence length="561" mass="63553">MAHYELHVLFVHSWMLALILITTLVWLAASQKAFTPDLVFPEMNRNSSWSVANYGEILCPTSFQSYDPKKHQILTRVLVERPSLNTDTKVEGYTCHKVKYETICDMPWYFSPTISHSISPLRVKESECKDAIAEHQLGTHVPLSFPPEDCSWNSVNTKEYEDIIVKEHPVMLDPYTNNYVDAIFPGGISSPGMGGTIHDDMMWVSKDLAVSPECSGWQRSMGLIYSSRLYGEREPMLEVGSIHIEGHRDKNLTLACRISFCGEIGVRFHDGEWMKVSVNLDHPNSVTFQVTDFPPCPPGTTIQTAVVENINPEIQELTVNMMYRLKCQETISKMVSGLPTSALDLSYLIQVQEGPGIVYKREKGILYQSVGMYQYIDTVTLNKEENQLGENSRGQKVFWTEWSDSPTRPGLQEGINGIVKYEGQVRVPLGMSLRLEAATELMWGHPVHTVSHPILHVISNHTEQSVTTWNRGVNSTNLIGLATRSISGFYDNLKLYLILALIFVSLIALVVLDVIPFKYILFVLCPPLLLCRFIKCSRRKPETRDRYHVEYNRPGQVSSAF</sequence>
<proteinExistence type="inferred from homology"/>
<organismHost>
    <name type="scientific">Drosophila melanogaster</name>
    <name type="common">Fruit fly</name>
    <dbReference type="NCBI Taxonomy" id="7227"/>
</organismHost>
<comment type="function">
    <text evidence="2">Attaches the virus to host receptors, inducing clathrin-dependent endocytosis of the virion.</text>
</comment>
<comment type="function">
    <text evidence="2">In the endosome, the acidic pH induces conformational changes in the glycoprotein trimer, which trigger fusion between virus and endosomal membrane.</text>
</comment>
<comment type="subunit">
    <text evidence="2">Homotrimer.</text>
</comment>
<comment type="subcellular location">
    <subcellularLocation>
        <location evidence="2">Virion membrane</location>
        <topology evidence="2">Single-pass type I membrane protein</topology>
    </subcellularLocation>
    <subcellularLocation>
        <location evidence="2">Host membrane</location>
        <topology evidence="2">Single-pass type I membrane protein</topology>
    </subcellularLocation>
</comment>
<comment type="PTM">
    <text evidence="2">Glycosylated by host.</text>
</comment>
<comment type="similarity">
    <text evidence="4">Belongs to the vesiculovirus glycoprotein family.</text>
</comment>
<accession>A7WNB3</accession>
<name>GLYCO_DMSVA</name>
<gene>
    <name type="primary">G</name>
</gene>
<dbReference type="EMBL" id="AM689309">
    <property type="protein sequence ID" value="CAM82926.2"/>
    <property type="molecule type" value="Genomic_RNA"/>
</dbReference>
<dbReference type="RefSeq" id="YP_003126912.1">
    <property type="nucleotide sequence ID" value="NC_013135.1"/>
</dbReference>
<dbReference type="SMR" id="A7WNB3"/>
<dbReference type="GeneID" id="8363509"/>
<dbReference type="KEGG" id="vg:8363509"/>
<dbReference type="OrthoDB" id="21147at10239"/>
<dbReference type="Proteomes" id="UP000029768">
    <property type="component" value="Genome"/>
</dbReference>
<dbReference type="GO" id="GO:0033644">
    <property type="term" value="C:host cell membrane"/>
    <property type="evidence" value="ECO:0007669"/>
    <property type="project" value="UniProtKB-SubCell"/>
</dbReference>
<dbReference type="GO" id="GO:0016020">
    <property type="term" value="C:membrane"/>
    <property type="evidence" value="ECO:0007669"/>
    <property type="project" value="UniProtKB-KW"/>
</dbReference>
<dbReference type="GO" id="GO:0019031">
    <property type="term" value="C:viral envelope"/>
    <property type="evidence" value="ECO:0007669"/>
    <property type="project" value="UniProtKB-KW"/>
</dbReference>
<dbReference type="GO" id="GO:0055036">
    <property type="term" value="C:virion membrane"/>
    <property type="evidence" value="ECO:0007669"/>
    <property type="project" value="UniProtKB-SubCell"/>
</dbReference>
<dbReference type="GO" id="GO:0075512">
    <property type="term" value="P:clathrin-dependent endocytosis of virus by host cell"/>
    <property type="evidence" value="ECO:0007669"/>
    <property type="project" value="UniProtKB-KW"/>
</dbReference>
<dbReference type="GO" id="GO:0039654">
    <property type="term" value="P:fusion of virus membrane with host endosome membrane"/>
    <property type="evidence" value="ECO:0007669"/>
    <property type="project" value="UniProtKB-KW"/>
</dbReference>
<dbReference type="GO" id="GO:0019062">
    <property type="term" value="P:virion attachment to host cell"/>
    <property type="evidence" value="ECO:0007669"/>
    <property type="project" value="UniProtKB-KW"/>
</dbReference>
<dbReference type="Gene3D" id="2.30.29.130">
    <property type="match status" value="1"/>
</dbReference>
<dbReference type="InterPro" id="IPR055447">
    <property type="entry name" value="Rhabdo_glycop_CD"/>
</dbReference>
<dbReference type="InterPro" id="IPR001903">
    <property type="entry name" value="Rhabdo_glycop_FD"/>
</dbReference>
<dbReference type="Pfam" id="PF24833">
    <property type="entry name" value="Rhabdo_glycop_CD"/>
    <property type="match status" value="1"/>
</dbReference>
<dbReference type="Pfam" id="PF00974">
    <property type="entry name" value="Rhabdo_glycop_FD"/>
    <property type="match status" value="1"/>
</dbReference>
<dbReference type="SUPFAM" id="SSF161008">
    <property type="entry name" value="Viral glycoprotein ectodomain-like"/>
    <property type="match status" value="1"/>
</dbReference>
<reference key="1">
    <citation type="journal article" date="2007" name="Mol. Ecol.">
        <title>The recent spread of a vertically transmitted virus through populations of Drosophila melanogaster.</title>
        <authorList>
            <person name="Carpenter J.A."/>
            <person name="Obbard D.J."/>
            <person name="Maside X."/>
            <person name="Jiggins F.M."/>
        </authorList>
    </citation>
    <scope>NUCLEOTIDE SEQUENCE [GENOMIC RNA]</scope>
    <source>
        <strain>AP30</strain>
    </source>
</reference>
<evidence type="ECO:0000250" key="1"/>
<evidence type="ECO:0000250" key="2">
    <source>
        <dbReference type="UniProtKB" id="P03522"/>
    </source>
</evidence>
<evidence type="ECO:0000255" key="3"/>
<evidence type="ECO:0000305" key="4"/>
<feature type="signal peptide" evidence="3">
    <location>
        <begin position="1"/>
        <end position="30"/>
    </location>
</feature>
<feature type="chain" id="PRO_0000432051" description="Glycoprotein" evidence="3">
    <location>
        <begin position="31"/>
        <end position="561"/>
    </location>
</feature>
<feature type="topological domain" description="Virion surface" evidence="3">
    <location>
        <begin position="31"/>
        <end position="495"/>
    </location>
</feature>
<feature type="transmembrane region" description="Helical" evidence="3">
    <location>
        <begin position="496"/>
        <end position="530"/>
    </location>
</feature>
<feature type="topological domain" description="Intravirion" evidence="3">
    <location>
        <begin position="531"/>
        <end position="561"/>
    </location>
</feature>
<feature type="disulfide bond" evidence="1">
    <location>
        <begin position="59"/>
        <end position="327"/>
    </location>
</feature>
<feature type="disulfide bond" evidence="1">
    <location>
        <begin position="95"/>
        <end position="128"/>
    </location>
</feature>
<feature type="disulfide bond" evidence="1">
    <location>
        <begin position="104"/>
        <end position="150"/>
    </location>
</feature>
<feature type="disulfide bond" evidence="1">
    <location>
        <begin position="214"/>
        <end position="261"/>
    </location>
</feature>
<feature type="disulfide bond" evidence="1">
    <location>
        <begin position="256"/>
        <end position="296"/>
    </location>
</feature>